<organism>
    <name type="scientific">Escherichia coli O157:H7</name>
    <dbReference type="NCBI Taxonomy" id="83334"/>
    <lineage>
        <taxon>Bacteria</taxon>
        <taxon>Pseudomonadati</taxon>
        <taxon>Pseudomonadota</taxon>
        <taxon>Gammaproteobacteria</taxon>
        <taxon>Enterobacterales</taxon>
        <taxon>Enterobacteriaceae</taxon>
        <taxon>Escherichia</taxon>
    </lineage>
</organism>
<sequence>MVWLANPERYGQMQYRYCGKSGLRLPALSLGLWHNFGHVNALESQRAILRKAFDLGITHFDLANNYGPPPGSAEENFGRLLREDFAAYRDELIISTKAGYDMWPGPYGSGGSRKYLLASLDQSLKRMGLEYVDIFYSHRVDENTPMEETASALAHAVQSGKALYVGISSYSPERTQKMVELLHEWKIPLLIHQPSYNLLNRWVDKSGLLDTLQNNGVGCIAFTPLAQGLLTGKYLNGIPEDSRMHREGNKVRGLTPKMLTEANLNSLRLLNEMAQQRGQSMAQMALSWLLKDERVTSVLVGASRAEQLEENVQALNNLTFSTEELAQIDQHIADGELNLWQASSDK</sequence>
<name>GPR_ECO57</name>
<comment type="function">
    <text evidence="1">Aldo-keto reductase that catalyzes the stereospecific, NADPH-dependent reduction of L-glyceraldehyde 3-phosphate (L-GAP) to L-glycerol 3-phosphate (L-G3P).</text>
</comment>
<comment type="catalytic activity">
    <reaction evidence="1">
        <text>a primary alcohol + NADP(+) = an aldehyde + NADPH + H(+)</text>
        <dbReference type="Rhea" id="RHEA:15937"/>
        <dbReference type="ChEBI" id="CHEBI:15378"/>
        <dbReference type="ChEBI" id="CHEBI:15734"/>
        <dbReference type="ChEBI" id="CHEBI:17478"/>
        <dbReference type="ChEBI" id="CHEBI:57783"/>
        <dbReference type="ChEBI" id="CHEBI:58349"/>
        <dbReference type="EC" id="1.1.1.2"/>
    </reaction>
</comment>
<comment type="similarity">
    <text evidence="2">Belongs to the shaker potassium channel beta subunit family.</text>
</comment>
<keyword id="KW-0521">NADP</keyword>
<keyword id="KW-0560">Oxidoreductase</keyword>
<keyword id="KW-1185">Reference proteome</keyword>
<protein>
    <recommendedName>
        <fullName evidence="1">L-glyceraldehyde 3-phosphate reductase</fullName>
        <shortName evidence="1">L-GAP reductase</shortName>
        <ecNumber evidence="1">1.1.1.-</ecNumber>
    </recommendedName>
    <alternativeName>
        <fullName evidence="1">Aldo-keto reductase YqhE</fullName>
        <ecNumber evidence="1">1.1.1.2</ecNumber>
    </alternativeName>
</protein>
<accession>Q8X529</accession>
<dbReference type="EC" id="1.1.1.-" evidence="1"/>
<dbReference type="EC" id="1.1.1.2" evidence="1"/>
<dbReference type="EMBL" id="AE005174">
    <property type="protein sequence ID" value="AAG58137.1"/>
    <property type="molecule type" value="Genomic_DNA"/>
</dbReference>
<dbReference type="EMBL" id="BA000007">
    <property type="protein sequence ID" value="BAB37308.1"/>
    <property type="molecule type" value="Genomic_DNA"/>
</dbReference>
<dbReference type="PIR" id="E85959">
    <property type="entry name" value="E85959"/>
</dbReference>
<dbReference type="PIR" id="E91114">
    <property type="entry name" value="E91114"/>
</dbReference>
<dbReference type="RefSeq" id="NP_311912.1">
    <property type="nucleotide sequence ID" value="NC_002695.1"/>
</dbReference>
<dbReference type="RefSeq" id="WP_000262146.1">
    <property type="nucleotide sequence ID" value="NZ_VOAI01000009.1"/>
</dbReference>
<dbReference type="SMR" id="Q8X529"/>
<dbReference type="STRING" id="155864.Z4354"/>
<dbReference type="GeneID" id="916499"/>
<dbReference type="KEGG" id="ece:Z4354"/>
<dbReference type="KEGG" id="ecs:ECs_3885"/>
<dbReference type="PATRIC" id="fig|386585.9.peg.4053"/>
<dbReference type="eggNOG" id="COG0667">
    <property type="taxonomic scope" value="Bacteria"/>
</dbReference>
<dbReference type="HOGENOM" id="CLU_023205_2_0_6"/>
<dbReference type="OMA" id="MWAGPYG"/>
<dbReference type="Proteomes" id="UP000000558">
    <property type="component" value="Chromosome"/>
</dbReference>
<dbReference type="Proteomes" id="UP000002519">
    <property type="component" value="Chromosome"/>
</dbReference>
<dbReference type="GO" id="GO:0016616">
    <property type="term" value="F:oxidoreductase activity, acting on the CH-OH group of donors, NAD or NADP as acceptor"/>
    <property type="evidence" value="ECO:0000250"/>
    <property type="project" value="UniProtKB"/>
</dbReference>
<dbReference type="GO" id="GO:0051596">
    <property type="term" value="P:methylglyoxal catabolic process"/>
    <property type="evidence" value="ECO:0007669"/>
    <property type="project" value="InterPro"/>
</dbReference>
<dbReference type="GO" id="GO:0009438">
    <property type="term" value="P:methylglyoxal metabolic process"/>
    <property type="evidence" value="ECO:0000250"/>
    <property type="project" value="UniProtKB"/>
</dbReference>
<dbReference type="CDD" id="cd19150">
    <property type="entry name" value="AKR_AKR14A1"/>
    <property type="match status" value="1"/>
</dbReference>
<dbReference type="FunFam" id="3.20.20.100:FF:000020">
    <property type="entry name" value="L-glyceraldehyde 3-phosphate reductase"/>
    <property type="match status" value="1"/>
</dbReference>
<dbReference type="Gene3D" id="3.20.20.100">
    <property type="entry name" value="NADP-dependent oxidoreductase domain"/>
    <property type="match status" value="1"/>
</dbReference>
<dbReference type="InterPro" id="IPR047628">
    <property type="entry name" value="GAP_reductase"/>
</dbReference>
<dbReference type="InterPro" id="IPR005399">
    <property type="entry name" value="K_chnl_volt-dep_bsu_KCNAB-rel"/>
</dbReference>
<dbReference type="InterPro" id="IPR023210">
    <property type="entry name" value="NADP_OxRdtase_dom"/>
</dbReference>
<dbReference type="InterPro" id="IPR036812">
    <property type="entry name" value="NADP_OxRdtase_dom_sf"/>
</dbReference>
<dbReference type="NCBIfam" id="NF007388">
    <property type="entry name" value="PRK09912.1"/>
    <property type="match status" value="1"/>
</dbReference>
<dbReference type="PANTHER" id="PTHR43150">
    <property type="entry name" value="HYPERKINETIC, ISOFORM M"/>
    <property type="match status" value="1"/>
</dbReference>
<dbReference type="PANTHER" id="PTHR43150:SF4">
    <property type="entry name" value="L-GLYCERALDEHYDE 3-PHOSPHATE REDUCTASE"/>
    <property type="match status" value="1"/>
</dbReference>
<dbReference type="Pfam" id="PF00248">
    <property type="entry name" value="Aldo_ket_red"/>
    <property type="match status" value="1"/>
</dbReference>
<dbReference type="SUPFAM" id="SSF51430">
    <property type="entry name" value="NAD(P)-linked oxidoreductase"/>
    <property type="match status" value="1"/>
</dbReference>
<feature type="chain" id="PRO_0000201332" description="L-glyceraldehyde 3-phosphate reductase">
    <location>
        <begin position="1"/>
        <end position="346"/>
    </location>
</feature>
<feature type="binding site" evidence="1">
    <location>
        <position position="33"/>
    </location>
    <ligand>
        <name>NADP(+)</name>
        <dbReference type="ChEBI" id="CHEBI:58349"/>
    </ligand>
</feature>
<feature type="binding site" evidence="1">
    <location>
        <position position="61"/>
    </location>
    <ligand>
        <name>NADP(+)</name>
        <dbReference type="ChEBI" id="CHEBI:58349"/>
    </ligand>
</feature>
<feature type="binding site" evidence="1">
    <location>
        <position position="66"/>
    </location>
    <ligand>
        <name>NADP(+)</name>
        <dbReference type="ChEBI" id="CHEBI:58349"/>
    </ligand>
</feature>
<feature type="binding site" evidence="1">
    <location>
        <position position="168"/>
    </location>
    <ligand>
        <name>NADP(+)</name>
        <dbReference type="ChEBI" id="CHEBI:58349"/>
    </ligand>
</feature>
<feature type="binding site" evidence="1">
    <location>
        <position position="193"/>
    </location>
    <ligand>
        <name>NADP(+)</name>
        <dbReference type="ChEBI" id="CHEBI:58349"/>
    </ligand>
</feature>
<feature type="binding site" evidence="1">
    <location>
        <position position="223"/>
    </location>
    <ligand>
        <name>NADP(+)</name>
        <dbReference type="ChEBI" id="CHEBI:58349"/>
    </ligand>
</feature>
<feature type="binding site" evidence="1">
    <location>
        <position position="225"/>
    </location>
    <ligand>
        <name>NADP(+)</name>
        <dbReference type="ChEBI" id="CHEBI:58349"/>
    </ligand>
</feature>
<feature type="binding site" evidence="1">
    <location>
        <position position="227"/>
    </location>
    <ligand>
        <name>NADP(+)</name>
        <dbReference type="ChEBI" id="CHEBI:58349"/>
    </ligand>
</feature>
<feature type="binding site" evidence="1">
    <location>
        <position position="233"/>
    </location>
    <ligand>
        <name>NADP(+)</name>
        <dbReference type="ChEBI" id="CHEBI:58349"/>
    </ligand>
</feature>
<feature type="binding site" evidence="1">
    <location>
        <position position="303"/>
    </location>
    <ligand>
        <name>NADP(+)</name>
        <dbReference type="ChEBI" id="CHEBI:58349"/>
    </ligand>
</feature>
<feature type="binding site" evidence="1">
    <location>
        <position position="307"/>
    </location>
    <ligand>
        <name>NADP(+)</name>
        <dbReference type="ChEBI" id="CHEBI:58349"/>
    </ligand>
</feature>
<feature type="binding site" evidence="1">
    <location>
        <position position="311"/>
    </location>
    <ligand>
        <name>NADP(+)</name>
        <dbReference type="ChEBI" id="CHEBI:58349"/>
    </ligand>
</feature>
<feature type="site" description="Important for catalysis" evidence="1">
    <location>
        <position position="61"/>
    </location>
</feature>
<feature type="site" description="Important for catalysis" evidence="1">
    <location>
        <position position="66"/>
    </location>
</feature>
<feature type="site" description="Important for catalysis" evidence="1">
    <location>
        <position position="97"/>
    </location>
</feature>
<feature type="site" description="Important for catalysis" evidence="1">
    <location>
        <position position="138"/>
    </location>
</feature>
<evidence type="ECO:0000250" key="1">
    <source>
        <dbReference type="UniProtKB" id="Q46851"/>
    </source>
</evidence>
<evidence type="ECO:0000305" key="2"/>
<proteinExistence type="inferred from homology"/>
<gene>
    <name evidence="1" type="primary">gpr</name>
    <name type="synonym">yghZ</name>
    <name type="ordered locus">Z4354</name>
    <name type="ordered locus">ECs3885</name>
</gene>
<reference key="1">
    <citation type="journal article" date="2001" name="Nature">
        <title>Genome sequence of enterohaemorrhagic Escherichia coli O157:H7.</title>
        <authorList>
            <person name="Perna N.T."/>
            <person name="Plunkett G. III"/>
            <person name="Burland V."/>
            <person name="Mau B."/>
            <person name="Glasner J.D."/>
            <person name="Rose D.J."/>
            <person name="Mayhew G.F."/>
            <person name="Evans P.S."/>
            <person name="Gregor J."/>
            <person name="Kirkpatrick H.A."/>
            <person name="Posfai G."/>
            <person name="Hackett J."/>
            <person name="Klink S."/>
            <person name="Boutin A."/>
            <person name="Shao Y."/>
            <person name="Miller L."/>
            <person name="Grotbeck E.J."/>
            <person name="Davis N.W."/>
            <person name="Lim A."/>
            <person name="Dimalanta E.T."/>
            <person name="Potamousis K."/>
            <person name="Apodaca J."/>
            <person name="Anantharaman T.S."/>
            <person name="Lin J."/>
            <person name="Yen G."/>
            <person name="Schwartz D.C."/>
            <person name="Welch R.A."/>
            <person name="Blattner F.R."/>
        </authorList>
    </citation>
    <scope>NUCLEOTIDE SEQUENCE [LARGE SCALE GENOMIC DNA]</scope>
    <source>
        <strain>O157:H7 / EDL933 / ATCC 700927 / EHEC</strain>
    </source>
</reference>
<reference key="2">
    <citation type="journal article" date="2001" name="DNA Res.">
        <title>Complete genome sequence of enterohemorrhagic Escherichia coli O157:H7 and genomic comparison with a laboratory strain K-12.</title>
        <authorList>
            <person name="Hayashi T."/>
            <person name="Makino K."/>
            <person name="Ohnishi M."/>
            <person name="Kurokawa K."/>
            <person name="Ishii K."/>
            <person name="Yokoyama K."/>
            <person name="Han C.-G."/>
            <person name="Ohtsubo E."/>
            <person name="Nakayama K."/>
            <person name="Murata T."/>
            <person name="Tanaka M."/>
            <person name="Tobe T."/>
            <person name="Iida T."/>
            <person name="Takami H."/>
            <person name="Honda T."/>
            <person name="Sasakawa C."/>
            <person name="Ogasawara N."/>
            <person name="Yasunaga T."/>
            <person name="Kuhara S."/>
            <person name="Shiba T."/>
            <person name="Hattori M."/>
            <person name="Shinagawa H."/>
        </authorList>
    </citation>
    <scope>NUCLEOTIDE SEQUENCE [LARGE SCALE GENOMIC DNA]</scope>
    <source>
        <strain>O157:H7 / Sakai / RIMD 0509952 / EHEC</strain>
    </source>
</reference>